<reference key="1">
    <citation type="journal article" date="1994" name="Genomics">
        <title>The HNF-3 gene family of transcription factors in mice: gene structure, cDNA sequence, and mRNA distribution.</title>
        <authorList>
            <person name="Kaestner K."/>
            <person name="Hiemisch H."/>
            <person name="Luckow B."/>
            <person name="Schuetz G."/>
        </authorList>
    </citation>
    <scope>NUCLEOTIDE SEQUENCE [MRNA]</scope>
    <source>
        <tissue>Liver</tissue>
    </source>
</reference>
<reference key="2">
    <citation type="submission" date="1996-01" db="EMBL/GenBank/DDBJ databases">
        <authorList>
            <person name="Farrington S.M."/>
            <person name="Baron M.H."/>
        </authorList>
    </citation>
    <scope>NUCLEOTIDE SEQUENCE [MRNA]</scope>
</reference>
<reference key="3">
    <citation type="journal article" date="2004" name="Genome Res.">
        <title>The status, quality, and expansion of the NIH full-length cDNA project: the Mammalian Gene Collection (MGC).</title>
        <authorList>
            <consortium name="The MGC Project Team"/>
        </authorList>
    </citation>
    <scope>NUCLEOTIDE SEQUENCE [LARGE SCALE MRNA]</scope>
    <source>
        <strain>C57BL/6J</strain>
    </source>
</reference>
<reference key="4">
    <citation type="journal article" date="1999" name="Genes Dev.">
        <title>Inactivation of the winged helix transcription factor HNF3alpha affects glucose homeostasis and islet glucagon gene expression in vivo.</title>
        <authorList>
            <person name="Kaestner K.H."/>
            <person name="Katz J."/>
            <person name="Liu Y."/>
            <person name="Drucker D.J."/>
            <person name="Schutz G."/>
        </authorList>
    </citation>
    <scope>DISRUPTION PHENOTYPE</scope>
    <scope>FUNCTION IN GLUCOSE HOMEOSTASIS</scope>
</reference>
<reference key="5">
    <citation type="journal article" date="2001" name="J. Biol. Chem.">
        <title>Transcription factor FoxA (HNF3) on a nucleosome at an enhancer complex in liver chromatin.</title>
        <authorList>
            <person name="Chaya D."/>
            <person name="Hayamizu T."/>
            <person name="Bustin M."/>
            <person name="Zaret K.S."/>
        </authorList>
    </citation>
    <scope>ASSOCIATION WITH NUCLEOSOMES</scope>
</reference>
<reference key="6">
    <citation type="journal article" date="2002" name="Mol. Cell">
        <title>Opening of compacted chromatin by early developmental transcription factors HNF3 (FoxA) and GATA-4.</title>
        <authorList>
            <person name="Cirillo L.A."/>
            <person name="Lin F.R."/>
            <person name="Cuesta I."/>
            <person name="Friedman D."/>
            <person name="Jarnik M."/>
            <person name="Zaret K.S."/>
        </authorList>
    </citation>
    <scope>FUNCTION IN CHROMATIN OPENING</scope>
    <scope>INTERACTION WITH HISTONES H3 AND H4</scope>
</reference>
<reference key="7">
    <citation type="journal article" date="2004" name="J. Biol. Chem.">
        <title>Mild nephrogenic diabetes insipidus caused by Foxa1 deficiency.</title>
        <authorList>
            <person name="Behr R."/>
            <person name="Brestelli J."/>
            <person name="Fulmer J.T."/>
            <person name="Miyawaki N."/>
            <person name="Kleyman T.R."/>
            <person name="Kaestner K.H."/>
        </authorList>
    </citation>
    <scope>DISRUPTION PHENOTYPE</scope>
</reference>
<reference key="8">
    <citation type="journal article" date="2005" name="Development">
        <title>Forkhead box A1 regulates prostate ductal morphogenesis and promotes epithelial cell maturation.</title>
        <authorList>
            <person name="Gao N."/>
            <person name="Ishii K."/>
            <person name="Mirosevich J."/>
            <person name="Kuwajima S."/>
            <person name="Oppenheimer S.R."/>
            <person name="Roberts R.L."/>
            <person name="Jiang M."/>
            <person name="Yu X."/>
            <person name="Shappell S.B."/>
            <person name="Caprioli R.M."/>
            <person name="Stoffel M."/>
            <person name="Hayward S.W."/>
            <person name="Matusik R.J."/>
        </authorList>
    </citation>
    <scope>FUNCTION IN PROSTATE DEVELOPMENT</scope>
    <scope>SUBCELLULAR LOCATION</scope>
    <scope>TISSUE SPECIFICITY</scope>
    <scope>DISRUPTION PHENOTYPE</scope>
</reference>
<reference key="9">
    <citation type="journal article" date="2005" name="Exp. Cell Res.">
        <title>FoxA1 binding to the MMTV LTR modulates chromatin structure and transcription.</title>
        <authorList>
            <person name="Holmqvist P.H."/>
            <person name="Belikov S."/>
            <person name="Zaret K.S."/>
            <person name="Wrange O."/>
        </authorList>
    </citation>
    <scope>FUNCTION IN CHROMATIN OPENING</scope>
</reference>
<reference key="10">
    <citation type="journal article" date="2005" name="J. Biol. Chem.">
        <title>Compensatory roles of Foxa1 and Foxa2 during lung morphogenesis.</title>
        <authorList>
            <person name="Wan H."/>
            <person name="Dingle S."/>
            <person name="Xu Y."/>
            <person name="Besnard V."/>
            <person name="Kaestner K.H."/>
            <person name="Ang S.L."/>
            <person name="Wert S."/>
            <person name="Stahlman M.T."/>
            <person name="Whitsett J.A."/>
        </authorList>
    </citation>
    <scope>FUNCTION IN LUNG DEVELOPMENT</scope>
</reference>
<reference key="11">
    <citation type="journal article" date="2005" name="Nature">
        <title>The initiation of liver development is dependent on Foxa transcription factors.</title>
        <authorList>
            <person name="Lee C.S."/>
            <person name="Friedman J.R."/>
            <person name="Fulmer J.T."/>
            <person name="Kaestner K.H."/>
        </authorList>
    </citation>
    <scope>FUNCTION IN LIVER DEVELOPMENT</scope>
</reference>
<reference key="12">
    <citation type="journal article" date="2007" name="Development">
        <title>Foxa1 and Foxa2 regulate multiple phases of midbrain dopaminergic neuron development in a dosage-dependent manner.</title>
        <authorList>
            <person name="Ferri A.L."/>
            <person name="Lin W."/>
            <person name="Mavromatakis Y.E."/>
            <person name="Wang J.C."/>
            <person name="Sasaki H."/>
            <person name="Whitsett J.A."/>
            <person name="Ang S.L."/>
        </authorList>
    </citation>
    <scope>FUNCTION IN NEURON DEVELOPMENT</scope>
</reference>
<reference key="13">
    <citation type="journal article" date="2007" name="Mol. Cell. Biol.">
        <title>Physical and functional interactions between homeodomain NKX2.1 and winged helix/forkhead FOXA1 in lung epithelial cells.</title>
        <authorList>
            <person name="Minoo P."/>
            <person name="Hu L."/>
            <person name="Xing Y."/>
            <person name="Zhu N.L."/>
            <person name="Chen H."/>
            <person name="Li M."/>
            <person name="Borok Z."/>
            <person name="Li C."/>
        </authorList>
    </citation>
    <scope>DEVELOPMENTAL STAGE</scope>
</reference>
<reference key="14">
    <citation type="journal article" date="2008" name="Genes Dev.">
        <title>Dynamic regulation of Pdx1 enhancers by Foxa1 and Foxa2 is essential for pancreas development.</title>
        <authorList>
            <person name="Gao N."/>
            <person name="LeLay J."/>
            <person name="Vatamaniuk M.Z."/>
            <person name="Rieck S."/>
            <person name="Friedman J.R."/>
            <person name="Kaestner K.H."/>
        </authorList>
    </citation>
    <scope>FUNCTION IN PANCREAS DEVELOPMENT</scope>
</reference>
<reference key="15">
    <citation type="journal article" date="2009" name="J. Clin. Invest.">
        <title>Foxa1 and Foxa2 regulate bile duct development in mice.</title>
        <authorList>
            <person name="Li Z."/>
            <person name="White P."/>
            <person name="Tuteja G."/>
            <person name="Rubins N."/>
            <person name="Sackett S."/>
            <person name="Kaestner K.H."/>
        </authorList>
    </citation>
    <scope>FUNCTION IN BILE DUCT DEVELOPMENT</scope>
</reference>
<evidence type="ECO:0000250" key="1"/>
<evidence type="ECO:0000250" key="2">
    <source>
        <dbReference type="UniProtKB" id="P55317"/>
    </source>
</evidence>
<evidence type="ECO:0000255" key="3">
    <source>
        <dbReference type="PROSITE-ProRule" id="PRU00089"/>
    </source>
</evidence>
<evidence type="ECO:0000256" key="4">
    <source>
        <dbReference type="SAM" id="MobiDB-lite"/>
    </source>
</evidence>
<evidence type="ECO:0000269" key="5">
    <source>
    </source>
</evidence>
<evidence type="ECO:0000269" key="6">
    <source>
    </source>
</evidence>
<evidence type="ECO:0000269" key="7">
    <source>
    </source>
</evidence>
<evidence type="ECO:0000269" key="8">
    <source>
    </source>
</evidence>
<evidence type="ECO:0000269" key="9">
    <source>
    </source>
</evidence>
<evidence type="ECO:0000269" key="10">
    <source>
    </source>
</evidence>
<evidence type="ECO:0000269" key="11">
    <source>
    </source>
</evidence>
<evidence type="ECO:0000269" key="12">
    <source>
    </source>
</evidence>
<evidence type="ECO:0000269" key="13">
    <source>
    </source>
</evidence>
<evidence type="ECO:0000269" key="14">
    <source>
    </source>
</evidence>
<evidence type="ECO:0000269" key="15">
    <source>
    </source>
</evidence>
<evidence type="ECO:0000305" key="16"/>
<name>FOXA1_MOUSE</name>
<comment type="function">
    <text evidence="1 5 6 8 9 10 11 13 14 15">Transcription factor that is involved in embryonic development, establishment of tissue-specific gene expression and regulation of gene expression in differentiated tissues. Is thought to act as a 'pioneer' factor opening the compacted chromatin for other proteins through interactions with nucleosomal core histones and thereby replacing linker histones at target enhancer and/or promoter sites. Binds DNA with the consensus sequence 5'-[AC]A[AT]T[AG]TT[GT][AG][CT]T[CT]-3' (By similarity). Proposed to play a role in translating the epigenetic signatures into cell type-specific enhancer-driven transcriptional programs. Involved in the development of multiple endoderm-derived organ systems such as the liver, pancreas, lungs and prostate; FOXA1 and FOXA2 seem to have at least in part redundant roles. Plays a role in prostate morphogenesis and epithelial cell differentiation. FOXA1 and FOXA2 are essential for hepatic specification. FOXA1 and FOXA2 are required for morphogenesis and cell differentiation during formation of the lung. FOXA1 and FOXA2 are involved in bile duct formation; they positively regulate the binding of glucocorticoid receptor/NR3C1 to the IL6 promoter. FOXA1 and FOXA2 regulate multiple phases of midbrain dopaminergic neuron development; they regulate expression of NEUROG2 at the beginning of mDA neurogenesis and of NR4A2 and EN1 in immature mDA neurons. Modulates the transcriptional activity of nuclear hormone receptors. Is involved in ESR1-mediated transcription. Inhibits NKX2-1-mediated transcription from the SFTPC promoter in lung epithel independently from DNA-binding. Involved in regulation of apoptosis. Involved in cell cycle regulation. Originally described as a transcription activator for a number of liver genes such as AFP, albumin, tyrosine aminotransferase, PEPCK, etc. Interacts with the cis-acting regulatory regions of these genes. Involved in glucose homeostasis; activates the GCG promoter.</text>
</comment>
<comment type="subunit">
    <text evidence="1">Binds DNA as a monomer. Interacts with FOXA2. Interacts with NKX2-1. Interacts with HDAC7. Interacts with the histone H3-H4 heterodimer. Associates with nucleosomes containing histone H2A. Interacts with AR. Interacts with NR0B2 (By similarity).</text>
</comment>
<comment type="subcellular location">
    <subcellularLocation>
        <location evidence="3 11">Nucleus</location>
    </subcellularLocation>
</comment>
<comment type="tissue specificity">
    <text evidence="11">Restricted mainly to endoderm-derived tissues (lung, liver, stomach, and small intestine). Expressed in the prostate.</text>
</comment>
<comment type="developmental stage">
    <text evidence="12">Most abundant in midgestation embryos (day 9.5). In embryonic lung expressed at 12 dpc and 18 dpc with highest levels in proximal airways and lowest levels in the distal lung.</text>
</comment>
<comment type="disruption phenotype">
    <text evidence="5 7 11">The prostate shows a severely altered ductal pattern that resembles primitive epithelial cords surrounded by thick stromal layers; no differentiated or mature luminal epithelial cells are found. Dehydration and electrolyte imbalance, development of mild nephrogenic diabetes insipidus. Severe hypoglycemia due to at least in part diminished expression of GCG. Mice deficient for Fox1a and deficient for Foxa2 in the endoderm from 8.5 dpc onwards do not show hepatic bud formation. Mice deficient for Fox1a and deficient for Foxa2 in the midbrain from 10.5 dpc onwards show almost complete loss of mDA neurons. Mice deficient for Fox1a and deficient for Foxa2 in the embryonic liver show hyperplasia of the biliary tree due to at least in part activation of IL-6 expression, a proliferative signal for cholangiocytes.</text>
</comment>
<proteinExistence type="evidence at protein level"/>
<dbReference type="EMBL" id="X74936">
    <property type="protein sequence ID" value="CAA52890.1"/>
    <property type="molecule type" value="mRNA"/>
</dbReference>
<dbReference type="EMBL" id="U44752">
    <property type="protein sequence ID" value="AAA86760.1"/>
    <property type="molecule type" value="mRNA"/>
</dbReference>
<dbReference type="EMBL" id="BC096524">
    <property type="protein sequence ID" value="AAH96524.1"/>
    <property type="molecule type" value="mRNA"/>
</dbReference>
<dbReference type="CCDS" id="CCDS25926.1"/>
<dbReference type="PIR" id="A54258">
    <property type="entry name" value="A54258"/>
</dbReference>
<dbReference type="RefSeq" id="NP_032285.2">
    <property type="nucleotide sequence ID" value="NM_008259.4"/>
</dbReference>
<dbReference type="RefSeq" id="XP_006515542.1">
    <property type="nucleotide sequence ID" value="XM_006515479.5"/>
</dbReference>
<dbReference type="RefSeq" id="XP_006515544.1">
    <property type="nucleotide sequence ID" value="XM_006515481.2"/>
</dbReference>
<dbReference type="RefSeq" id="XP_006515546.1">
    <property type="nucleotide sequence ID" value="XM_006515483.2"/>
</dbReference>
<dbReference type="RefSeq" id="XP_017170451.1">
    <property type="nucleotide sequence ID" value="XM_017314962.3"/>
</dbReference>
<dbReference type="RefSeq" id="XP_030102422.1">
    <property type="nucleotide sequence ID" value="XM_030246562.2"/>
</dbReference>
<dbReference type="SMR" id="P35582"/>
<dbReference type="BioGRID" id="200351">
    <property type="interactions" value="2"/>
</dbReference>
<dbReference type="FunCoup" id="P35582">
    <property type="interactions" value="1828"/>
</dbReference>
<dbReference type="IntAct" id="P35582">
    <property type="interactions" value="2"/>
</dbReference>
<dbReference type="STRING" id="10090.ENSMUSP00000041118"/>
<dbReference type="iPTMnet" id="P35582"/>
<dbReference type="PhosphoSitePlus" id="P35582"/>
<dbReference type="PaxDb" id="10090-ENSMUSP00000041118"/>
<dbReference type="PeptideAtlas" id="P35582"/>
<dbReference type="ProteomicsDB" id="267396"/>
<dbReference type="Antibodypedia" id="23304">
    <property type="antibodies" value="1512 antibodies from 43 providers"/>
</dbReference>
<dbReference type="DNASU" id="15375"/>
<dbReference type="Ensembl" id="ENSMUST00000044380.8">
    <property type="protein sequence ID" value="ENSMUSP00000041118.7"/>
    <property type="gene ID" value="ENSMUSG00000035451.8"/>
</dbReference>
<dbReference type="GeneID" id="15375"/>
<dbReference type="KEGG" id="mmu:15375"/>
<dbReference type="UCSC" id="uc007nps.1">
    <property type="organism name" value="mouse"/>
</dbReference>
<dbReference type="AGR" id="MGI:1347472"/>
<dbReference type="CTD" id="3169"/>
<dbReference type="MGI" id="MGI:1347472">
    <property type="gene designation" value="Foxa1"/>
</dbReference>
<dbReference type="VEuPathDB" id="HostDB:ENSMUSG00000035451"/>
<dbReference type="eggNOG" id="KOG3563">
    <property type="taxonomic scope" value="Eukaryota"/>
</dbReference>
<dbReference type="GeneTree" id="ENSGT00940000162043"/>
<dbReference type="HOGENOM" id="CLU_027910_4_1_1"/>
<dbReference type="InParanoid" id="P35582"/>
<dbReference type="OMA" id="WSSYYTD"/>
<dbReference type="OrthoDB" id="5954824at2759"/>
<dbReference type="PhylomeDB" id="P35582"/>
<dbReference type="TreeFam" id="TF316127"/>
<dbReference type="Reactome" id="R-MMU-9018519">
    <property type="pathway name" value="Estrogen-dependent gene expression"/>
</dbReference>
<dbReference type="BioGRID-ORCS" id="15375">
    <property type="hits" value="2 hits in 80 CRISPR screens"/>
</dbReference>
<dbReference type="ChiTaRS" id="Foxa1">
    <property type="organism name" value="mouse"/>
</dbReference>
<dbReference type="PRO" id="PR:P35582"/>
<dbReference type="Proteomes" id="UP000000589">
    <property type="component" value="Chromosome 12"/>
</dbReference>
<dbReference type="RNAct" id="P35582">
    <property type="molecule type" value="protein"/>
</dbReference>
<dbReference type="Bgee" id="ENSMUSG00000035451">
    <property type="expression patterns" value="Expressed in prostate gland ventral lobe and 161 other cell types or tissues"/>
</dbReference>
<dbReference type="GO" id="GO:0001650">
    <property type="term" value="C:fibrillar center"/>
    <property type="evidence" value="ECO:0007669"/>
    <property type="project" value="Ensembl"/>
</dbReference>
<dbReference type="GO" id="GO:0005902">
    <property type="term" value="C:microvillus"/>
    <property type="evidence" value="ECO:0000314"/>
    <property type="project" value="MGI"/>
</dbReference>
<dbReference type="GO" id="GO:0005654">
    <property type="term" value="C:nucleoplasm"/>
    <property type="evidence" value="ECO:0007669"/>
    <property type="project" value="Ensembl"/>
</dbReference>
<dbReference type="GO" id="GO:0005634">
    <property type="term" value="C:nucleus"/>
    <property type="evidence" value="ECO:0000314"/>
    <property type="project" value="MGI"/>
</dbReference>
<dbReference type="GO" id="GO:0003682">
    <property type="term" value="F:chromatin binding"/>
    <property type="evidence" value="ECO:0000314"/>
    <property type="project" value="MGI"/>
</dbReference>
<dbReference type="GO" id="GO:0003677">
    <property type="term" value="F:DNA binding"/>
    <property type="evidence" value="ECO:0000314"/>
    <property type="project" value="MGI"/>
</dbReference>
<dbReference type="GO" id="GO:0003700">
    <property type="term" value="F:DNA-binding transcription factor activity"/>
    <property type="evidence" value="ECO:0000314"/>
    <property type="project" value="MGI"/>
</dbReference>
<dbReference type="GO" id="GO:0019904">
    <property type="term" value="F:protein domain specific binding"/>
    <property type="evidence" value="ECO:0007669"/>
    <property type="project" value="InterPro"/>
</dbReference>
<dbReference type="GO" id="GO:0000978">
    <property type="term" value="F:RNA polymerase II cis-regulatory region sequence-specific DNA binding"/>
    <property type="evidence" value="ECO:0000314"/>
    <property type="project" value="MGI"/>
</dbReference>
<dbReference type="GO" id="GO:0043565">
    <property type="term" value="F:sequence-specific DNA binding"/>
    <property type="evidence" value="ECO:0000314"/>
    <property type="project" value="MGI"/>
</dbReference>
<dbReference type="GO" id="GO:0061144">
    <property type="term" value="P:alveolar secondary septum development"/>
    <property type="evidence" value="ECO:0000315"/>
    <property type="project" value="MGI"/>
</dbReference>
<dbReference type="GO" id="GO:0048646">
    <property type="term" value="P:anatomical structure formation involved in morphogenesis"/>
    <property type="evidence" value="ECO:0000316"/>
    <property type="project" value="MGI"/>
</dbReference>
<dbReference type="GO" id="GO:0006338">
    <property type="term" value="P:chromatin remodeling"/>
    <property type="evidence" value="ECO:0000314"/>
    <property type="project" value="UniProtKB"/>
</dbReference>
<dbReference type="GO" id="GO:0061448">
    <property type="term" value="P:connective tissue development"/>
    <property type="evidence" value="ECO:0000316"/>
    <property type="project" value="MGI"/>
</dbReference>
<dbReference type="GO" id="GO:0071542">
    <property type="term" value="P:dopaminergic neuron differentiation"/>
    <property type="evidence" value="ECO:0000315"/>
    <property type="project" value="MGI"/>
</dbReference>
<dbReference type="GO" id="GO:0021904">
    <property type="term" value="P:dorsal/ventral neural tube patterning"/>
    <property type="evidence" value="ECO:0000316"/>
    <property type="project" value="MGI"/>
</dbReference>
<dbReference type="GO" id="GO:0060743">
    <property type="term" value="P:epithelial cell maturation involved in prostate gland development"/>
    <property type="evidence" value="ECO:0000315"/>
    <property type="project" value="MGI"/>
</dbReference>
<dbReference type="GO" id="GO:0060441">
    <property type="term" value="P:epithelial tube branching involved in lung morphogenesis"/>
    <property type="evidence" value="ECO:0000316"/>
    <property type="project" value="MGI"/>
</dbReference>
<dbReference type="GO" id="GO:0042593">
    <property type="term" value="P:glucose homeostasis"/>
    <property type="evidence" value="ECO:0000315"/>
    <property type="project" value="MGI"/>
</dbReference>
<dbReference type="GO" id="GO:0042445">
    <property type="term" value="P:hormone metabolic process"/>
    <property type="evidence" value="ECO:0000315"/>
    <property type="project" value="MGI"/>
</dbReference>
<dbReference type="GO" id="GO:0030324">
    <property type="term" value="P:lung development"/>
    <property type="evidence" value="ECO:0000316"/>
    <property type="project" value="MGI"/>
</dbReference>
<dbReference type="GO" id="GO:0060487">
    <property type="term" value="P:lung epithelial cell differentiation"/>
    <property type="evidence" value="ECO:0000316"/>
    <property type="project" value="MGI"/>
</dbReference>
<dbReference type="GO" id="GO:0060425">
    <property type="term" value="P:lung morphogenesis"/>
    <property type="evidence" value="ECO:0000315"/>
    <property type="project" value="MGI"/>
</dbReference>
<dbReference type="GO" id="GO:0060739">
    <property type="term" value="P:mesenchymal-epithelial cell signaling involved in prostate gland development"/>
    <property type="evidence" value="ECO:0000316"/>
    <property type="project" value="MGI"/>
</dbReference>
<dbReference type="GO" id="GO:0010719">
    <property type="term" value="P:negative regulation of epithelial to mesenchymal transition"/>
    <property type="evidence" value="ECO:0007669"/>
    <property type="project" value="Ensembl"/>
</dbReference>
<dbReference type="GO" id="GO:0000122">
    <property type="term" value="P:negative regulation of transcription by RNA polymerase II"/>
    <property type="evidence" value="ECO:0000315"/>
    <property type="project" value="MGI"/>
</dbReference>
<dbReference type="GO" id="GO:0030182">
    <property type="term" value="P:neuron differentiation"/>
    <property type="evidence" value="ECO:0000315"/>
    <property type="project" value="MGI"/>
</dbReference>
<dbReference type="GO" id="GO:0048665">
    <property type="term" value="P:neuron fate specification"/>
    <property type="evidence" value="ECO:0000316"/>
    <property type="project" value="MGI"/>
</dbReference>
<dbReference type="GO" id="GO:0007219">
    <property type="term" value="P:Notch signaling pathway"/>
    <property type="evidence" value="ECO:0000314"/>
    <property type="project" value="MGI"/>
</dbReference>
<dbReference type="GO" id="GO:0043065">
    <property type="term" value="P:positive regulation of apoptotic process"/>
    <property type="evidence" value="ECO:0007669"/>
    <property type="project" value="Ensembl"/>
</dbReference>
<dbReference type="GO" id="GO:1904340">
    <property type="term" value="P:positive regulation of dopaminergic neuron differentiation"/>
    <property type="evidence" value="ECO:0000315"/>
    <property type="project" value="MGI"/>
</dbReference>
<dbReference type="GO" id="GO:0033148">
    <property type="term" value="P:positive regulation of intracellular estrogen receptor signaling pathway"/>
    <property type="evidence" value="ECO:0007669"/>
    <property type="project" value="Ensembl"/>
</dbReference>
<dbReference type="GO" id="GO:0045931">
    <property type="term" value="P:positive regulation of mitotic cell cycle"/>
    <property type="evidence" value="ECO:0007669"/>
    <property type="project" value="Ensembl"/>
</dbReference>
<dbReference type="GO" id="GO:0045880">
    <property type="term" value="P:positive regulation of smoothened signaling pathway"/>
    <property type="evidence" value="ECO:0000316"/>
    <property type="project" value="MGI"/>
</dbReference>
<dbReference type="GO" id="GO:0045944">
    <property type="term" value="P:positive regulation of transcription by RNA polymerase II"/>
    <property type="evidence" value="ECO:0000314"/>
    <property type="project" value="MGI"/>
</dbReference>
<dbReference type="GO" id="GO:0060740">
    <property type="term" value="P:prostate gland epithelium morphogenesis"/>
    <property type="evidence" value="ECO:0000315"/>
    <property type="project" value="MGI"/>
</dbReference>
<dbReference type="GO" id="GO:0060741">
    <property type="term" value="P:prostate gland stromal morphogenesis"/>
    <property type="evidence" value="ECO:0000315"/>
    <property type="project" value="MGI"/>
</dbReference>
<dbReference type="GO" id="GO:0051726">
    <property type="term" value="P:regulation of cell cycle"/>
    <property type="evidence" value="ECO:0000314"/>
    <property type="project" value="MGI"/>
</dbReference>
<dbReference type="GO" id="GO:0010468">
    <property type="term" value="P:regulation of gene expression"/>
    <property type="evidence" value="ECO:0000316"/>
    <property type="project" value="MGI"/>
</dbReference>
<dbReference type="GO" id="GO:0006357">
    <property type="term" value="P:regulation of transcription by RNA polymerase II"/>
    <property type="evidence" value="ECO:0000315"/>
    <property type="project" value="MGI"/>
</dbReference>
<dbReference type="GO" id="GO:1902691">
    <property type="term" value="P:respiratory basal cell differentiation"/>
    <property type="evidence" value="ECO:0000315"/>
    <property type="project" value="MGI"/>
</dbReference>
<dbReference type="GO" id="GO:0032355">
    <property type="term" value="P:response to estradiol"/>
    <property type="evidence" value="ECO:0007669"/>
    <property type="project" value="Ensembl"/>
</dbReference>
<dbReference type="GO" id="GO:0060528">
    <property type="term" value="P:secretory columnal luminar epithelial cell differentiation involved in prostate glandular acinus development"/>
    <property type="evidence" value="ECO:0000315"/>
    <property type="project" value="MGI"/>
</dbReference>
<dbReference type="GO" id="GO:0007224">
    <property type="term" value="P:smoothened signaling pathway"/>
    <property type="evidence" value="ECO:0000316"/>
    <property type="project" value="MGI"/>
</dbReference>
<dbReference type="GO" id="GO:0035239">
    <property type="term" value="P:tube morphogenesis"/>
    <property type="evidence" value="ECO:0000315"/>
    <property type="project" value="MGI"/>
</dbReference>
<dbReference type="CDD" id="cd20038">
    <property type="entry name" value="FH_FOXA1"/>
    <property type="match status" value="1"/>
</dbReference>
<dbReference type="FunFam" id="1.10.10.10:FF:000042">
    <property type="entry name" value="hepatocyte nuclear factor 3-beta"/>
    <property type="match status" value="1"/>
</dbReference>
<dbReference type="Gene3D" id="1.10.10.10">
    <property type="entry name" value="Winged helix-like DNA-binding domain superfamily/Winged helix DNA-binding domain"/>
    <property type="match status" value="1"/>
</dbReference>
<dbReference type="InterPro" id="IPR013638">
    <property type="entry name" value="Fork-head_N"/>
</dbReference>
<dbReference type="InterPro" id="IPR001766">
    <property type="entry name" value="Fork_head_dom"/>
</dbReference>
<dbReference type="InterPro" id="IPR018533">
    <property type="entry name" value="Forkhead_box_C"/>
</dbReference>
<dbReference type="InterPro" id="IPR050211">
    <property type="entry name" value="FOX_domain-containing"/>
</dbReference>
<dbReference type="InterPro" id="IPR018122">
    <property type="entry name" value="TF_fork_head_CS_1"/>
</dbReference>
<dbReference type="InterPro" id="IPR030456">
    <property type="entry name" value="TF_fork_head_CS_2"/>
</dbReference>
<dbReference type="InterPro" id="IPR036388">
    <property type="entry name" value="WH-like_DNA-bd_sf"/>
</dbReference>
<dbReference type="InterPro" id="IPR036390">
    <property type="entry name" value="WH_DNA-bd_sf"/>
</dbReference>
<dbReference type="PANTHER" id="PTHR11829">
    <property type="entry name" value="FORKHEAD BOX PROTEIN"/>
    <property type="match status" value="1"/>
</dbReference>
<dbReference type="PANTHER" id="PTHR11829:SF195">
    <property type="entry name" value="HEPATOCYTE NUCLEAR FACTOR 3-ALPHA"/>
    <property type="match status" value="1"/>
</dbReference>
<dbReference type="Pfam" id="PF00250">
    <property type="entry name" value="Forkhead"/>
    <property type="match status" value="1"/>
</dbReference>
<dbReference type="Pfam" id="PF08430">
    <property type="entry name" value="Forkhead_N"/>
    <property type="match status" value="1"/>
</dbReference>
<dbReference type="Pfam" id="PF09354">
    <property type="entry name" value="HNF_C"/>
    <property type="match status" value="1"/>
</dbReference>
<dbReference type="PRINTS" id="PR00053">
    <property type="entry name" value="FORKHEAD"/>
</dbReference>
<dbReference type="SMART" id="SM00339">
    <property type="entry name" value="FH"/>
    <property type="match status" value="1"/>
</dbReference>
<dbReference type="SUPFAM" id="SSF46785">
    <property type="entry name" value="Winged helix' DNA-binding domain"/>
    <property type="match status" value="1"/>
</dbReference>
<dbReference type="PROSITE" id="PS00657">
    <property type="entry name" value="FORK_HEAD_1"/>
    <property type="match status" value="1"/>
</dbReference>
<dbReference type="PROSITE" id="PS00658">
    <property type="entry name" value="FORK_HEAD_2"/>
    <property type="match status" value="1"/>
</dbReference>
<dbReference type="PROSITE" id="PS50039">
    <property type="entry name" value="FORK_HEAD_3"/>
    <property type="match status" value="1"/>
</dbReference>
<gene>
    <name type="primary">Foxa1</name>
    <name type="synonym">Hnf3a</name>
    <name type="synonym">Tcf-3a</name>
    <name type="synonym">Tcf3a</name>
</gene>
<organism>
    <name type="scientific">Mus musculus</name>
    <name type="common">Mouse</name>
    <dbReference type="NCBI Taxonomy" id="10090"/>
    <lineage>
        <taxon>Eukaryota</taxon>
        <taxon>Metazoa</taxon>
        <taxon>Chordata</taxon>
        <taxon>Craniata</taxon>
        <taxon>Vertebrata</taxon>
        <taxon>Euteleostomi</taxon>
        <taxon>Mammalia</taxon>
        <taxon>Eutheria</taxon>
        <taxon>Euarchontoglires</taxon>
        <taxon>Glires</taxon>
        <taxon>Rodentia</taxon>
        <taxon>Myomorpha</taxon>
        <taxon>Muroidea</taxon>
        <taxon>Muridae</taxon>
        <taxon>Murinae</taxon>
        <taxon>Mus</taxon>
        <taxon>Mus</taxon>
    </lineage>
</organism>
<protein>
    <recommendedName>
        <fullName>Hepatocyte nuclear factor 3-alpha</fullName>
        <shortName>HNF-3-alpha</shortName>
        <shortName>HNF-3A</shortName>
    </recommendedName>
    <alternativeName>
        <fullName>Forkhead box protein A1</fullName>
    </alternativeName>
</protein>
<sequence length="468" mass="48854">MLGTVKMEGHESNDWNSYYADTQEAYSSVPVSNMNSGLGSMNSMNTYMTMNTMTTSGNMTPASFNMSYANTGLGAGLSPGAVAGMPGASAGAMNSMTAAGVTAMGTALSPGGMGSMGAQPATSMNGLGPYAAAMNPCMSPMAYAPSNLGRSRAGGGGDAKTFKRSYPHAKPPYSYISLITMAIQQAPSKMLTLSEIYQWIMDLFPYYRQNQQRWQNSIRHSLSFNDCFVKVARSPDKPGKGSYWTLHPDSGNMFENGCYLRRQKRFKCEKQPGAGGGSGGGGSKGGPESRKDPSGPGNPSAESPLHRGVHGKASQLEGAPAPGPAASPQTLDHSGATATGGASELKSPASSSAPPISSGPGALASVPPSHPAHGLAPHESQLHLKGDPHYSFNHPFSINNLMSSSEQQHKLDFKAYEQALQYSPYGATLPASLPLGSASVATRSPIEPSALEPAYYQGVYSRPVLNTS</sequence>
<feature type="chain" id="PRO_0000091793" description="Hepatocyte nuclear factor 3-alpha">
    <location>
        <begin position="1"/>
        <end position="468"/>
    </location>
</feature>
<feature type="DNA-binding region" description="Fork-head" evidence="3">
    <location>
        <begin position="169"/>
        <end position="260"/>
    </location>
</feature>
<feature type="region of interest" description="Essential for DNA binding">
    <location>
        <begin position="251"/>
        <end position="288"/>
    </location>
</feature>
<feature type="region of interest" description="Disordered" evidence="4">
    <location>
        <begin position="269"/>
        <end position="396"/>
    </location>
</feature>
<feature type="compositionally biased region" description="Gly residues" evidence="4">
    <location>
        <begin position="273"/>
        <end position="285"/>
    </location>
</feature>
<feature type="compositionally biased region" description="Low complexity" evidence="4">
    <location>
        <begin position="318"/>
        <end position="328"/>
    </location>
</feature>
<feature type="compositionally biased region" description="Low complexity" evidence="4">
    <location>
        <begin position="347"/>
        <end position="365"/>
    </location>
</feature>
<feature type="modified residue" description="Phosphoserine" evidence="2">
    <location>
        <position position="303"/>
    </location>
</feature>
<feature type="modified residue" description="Phosphoserine" evidence="2">
    <location>
        <position position="327"/>
    </location>
</feature>
<feature type="sequence conflict" description="In Ref. 1; CAA52890." evidence="16" ref="1">
    <original>A</original>
    <variation>V</variation>
    <location>
        <position position="121"/>
    </location>
</feature>
<feature type="sequence conflict" description="In Ref. 1; CAA52890." evidence="16" ref="1">
    <original>R</original>
    <variation>W</variation>
    <location>
        <position position="307"/>
    </location>
</feature>
<feature type="sequence conflict" description="In Ref. 2; AAA86760." evidence="16" ref="2">
    <original>H</original>
    <variation>R</variation>
    <location>
        <position position="389"/>
    </location>
</feature>
<accession>P35582</accession>
<accession>Q4VA63</accession>
<accession>Q61108</accession>
<keyword id="KW-0010">Activator</keyword>
<keyword id="KW-0156">Chromatin regulator</keyword>
<keyword id="KW-0217">Developmental protein</keyword>
<keyword id="KW-0238">DNA-binding</keyword>
<keyword id="KW-0539">Nucleus</keyword>
<keyword id="KW-0597">Phosphoprotein</keyword>
<keyword id="KW-1185">Reference proteome</keyword>
<keyword id="KW-0678">Repressor</keyword>
<keyword id="KW-0804">Transcription</keyword>
<keyword id="KW-0805">Transcription regulation</keyword>